<sequence>AECMVDETVCYIHNHNNC</sequence>
<proteinExistence type="evidence at protein level"/>
<organism>
    <name type="scientific">Segestria florentina</name>
    <name type="common">Tube-web spider</name>
    <name type="synonym">Segestria gracilis</name>
    <dbReference type="NCBI Taxonomy" id="31925"/>
    <lineage>
        <taxon>Eukaryota</taxon>
        <taxon>Metazoa</taxon>
        <taxon>Ecdysozoa</taxon>
        <taxon>Arthropoda</taxon>
        <taxon>Chelicerata</taxon>
        <taxon>Arachnida</taxon>
        <taxon>Araneae</taxon>
        <taxon>Araneomorphae</taxon>
        <taxon>Haplogynae</taxon>
        <taxon>Dysderoidea</taxon>
        <taxon>Segestriidae</taxon>
        <taxon>Segestria</taxon>
    </lineage>
</organism>
<protein>
    <recommendedName>
        <fullName evidence="4">Mu-segestritoxin-Sf1i</fullName>
        <shortName evidence="4">Mu-SGTX-Sf1i</shortName>
    </recommendedName>
    <alternativeName>
        <fullName evidence="3">Toxin F5.5</fullName>
    </alternativeName>
</protein>
<dbReference type="ArachnoServer" id="AS000124">
    <property type="toxin name" value="mu-segestritoxin-Sf1i (N-terminal fragment)"/>
</dbReference>
<dbReference type="GO" id="GO:0005576">
    <property type="term" value="C:extracellular region"/>
    <property type="evidence" value="ECO:0007669"/>
    <property type="project" value="UniProtKB-SubCell"/>
</dbReference>
<dbReference type="GO" id="GO:0090729">
    <property type="term" value="F:toxin activity"/>
    <property type="evidence" value="ECO:0007669"/>
    <property type="project" value="UniProtKB-KW"/>
</dbReference>
<dbReference type="Gene3D" id="4.10.40.60">
    <property type="match status" value="1"/>
</dbReference>
<dbReference type="InterPro" id="IPR053718">
    <property type="entry name" value="Insecticidal_knottin-like_sf"/>
</dbReference>
<dbReference type="InterPro" id="IPR012633">
    <property type="entry name" value="Toxin_28"/>
</dbReference>
<dbReference type="Pfam" id="PF08115">
    <property type="entry name" value="Toxin_28"/>
    <property type="match status" value="1"/>
</dbReference>
<evidence type="ECO:0000250" key="1">
    <source>
        <dbReference type="UniProtKB" id="P61095"/>
    </source>
</evidence>
<evidence type="ECO:0000269" key="2">
    <source>
    </source>
</evidence>
<evidence type="ECO:0000303" key="3">
    <source>
    </source>
</evidence>
<evidence type="ECO:0000305" key="4"/>
<evidence type="ECO:0000305" key="5">
    <source>
    </source>
</evidence>
<keyword id="KW-0903">Direct protein sequencing</keyword>
<keyword id="KW-1015">Disulfide bond</keyword>
<keyword id="KW-0964">Secreted</keyword>
<keyword id="KW-0800">Toxin</keyword>
<accession>P61094</accession>
<name>SFIF_SEGFL</name>
<reference key="1">
    <citation type="journal article" date="2002" name="Toxicon">
        <title>Novel insecticidal toxins from the venom of the spider Segestria florentina.</title>
        <authorList>
            <person name="Lipkin A."/>
            <person name="Kozlov S."/>
            <person name="Nosyreva E."/>
            <person name="Blake A."/>
            <person name="Windass J.D."/>
            <person name="Grishin E."/>
        </authorList>
    </citation>
    <scope>PROTEIN SEQUENCE</scope>
    <scope>FUNCTION</scope>
    <scope>SUBCELLULAR LOCATION</scope>
    <scope>MASS SPECTROMETRY</scope>
    <scope>TOXIC DOSE</scope>
    <source>
        <tissue>Venom</tissue>
    </source>
</reference>
<feature type="chain" id="PRO_0000087615" description="Mu-segestritoxin-Sf1i" evidence="2">
    <location>
        <begin position="1"/>
        <end position="18" status="greater than"/>
    </location>
</feature>
<feature type="unsure residue" evidence="5">
    <location>
        <position position="15"/>
    </location>
</feature>
<feature type="non-terminal residue" evidence="5">
    <location>
        <position position="18"/>
    </location>
</feature>
<comment type="function">
    <text evidence="2">Insecticidal toxin. Causes flaccid paralysis followed by death when injected into Heliothis virescens larvae. Does not induce any toxic effects when injected intravenously into adult mice at a dose of 1.1 mg/kg body weight.</text>
</comment>
<comment type="subcellular location">
    <subcellularLocation>
        <location evidence="2">Secreted</location>
    </subcellularLocation>
</comment>
<comment type="tissue specificity">
    <text evidence="5">Expressed by the venom gland.</text>
</comment>
<comment type="domain">
    <text evidence="1">The presence of a 'disulfide through disulfide knot' structurally defines this protein as a knottin.</text>
</comment>
<comment type="PTM">
    <text evidence="1">Contains 4 disulfide bonds.</text>
</comment>
<comment type="mass spectrometry"/>
<comment type="toxic dose">
    <text evidence="2">LD(50) is 4 mg/kg on H.virescens larvae.</text>
</comment>
<comment type="similarity">
    <text evidence="4">Belongs to the neurotoxin 16 (SFI) family.</text>
</comment>